<evidence type="ECO:0000250" key="1"/>
<evidence type="ECO:0000269" key="2">
    <source>
    </source>
</evidence>
<evidence type="ECO:0000305" key="3"/>
<proteinExistence type="inferred from homology"/>
<comment type="function">
    <text evidence="2">May protect the virus and component of infected cells from oxidative damage by peroxides whose formation may be stimulated by infection.</text>
</comment>
<comment type="catalytic activity">
    <reaction>
        <text>2 glutathione + H2O2 = glutathione disulfide + 2 H2O</text>
        <dbReference type="Rhea" id="RHEA:16833"/>
        <dbReference type="ChEBI" id="CHEBI:15377"/>
        <dbReference type="ChEBI" id="CHEBI:16240"/>
        <dbReference type="ChEBI" id="CHEBI:57925"/>
        <dbReference type="ChEBI" id="CHEBI:58297"/>
        <dbReference type="EC" id="1.11.1.9"/>
    </reaction>
</comment>
<comment type="PTM">
    <text evidence="1">During periods of oxidative stress, Sec-64 may react with a superoxide radical, irreversibly lose hydroselenide and be converted to dehydroalanine.</text>
</comment>
<comment type="miscellaneous">
    <text>This enzyme has been acquitted by lateral transfer from its human host and has retained 74% identity with cellular GPX1.</text>
</comment>
<comment type="similarity">
    <text evidence="3">Belongs to the glutathione peroxidase family.</text>
</comment>
<feature type="chain" id="PRO_0000318766" description="Glutathione peroxidase">
    <location>
        <begin position="1"/>
        <end position="220"/>
    </location>
</feature>
<feature type="active site" evidence="1">
    <location>
        <position position="64"/>
    </location>
</feature>
<feature type="site" description="Subject to oxidation and hydroselenide loss to dehydroalanine" evidence="1">
    <location>
        <position position="64"/>
    </location>
</feature>
<feature type="non-standard amino acid" description="Selenocysteine" evidence="1">
    <location>
        <position position="64"/>
    </location>
</feature>
<protein>
    <recommendedName>
        <fullName>Glutathione peroxidase</fullName>
        <shortName>GPx</shortName>
        <shortName>GSHPx</shortName>
        <ecNumber>1.11.1.9</ecNumber>
    </recommendedName>
</protein>
<name>GPX_MCV1</name>
<sequence>MADGSGARFPRFSELCAKYAAQLAAAETRSVYAFSARPITGGEPVSLGFLRGRVLLIENVASLUGSTVREYTQMNELQRRLGARGLVVLGFPCNQFGHQENAQNAEILPSLKHVRPGNGFEPNFMLFEKCEVNGARAHPLFAFLREALPAPSDDMSTLVSDPQLIAWSPVCRNDVAWNFEKFLVGADGTPVRRYSHRCQTLAVEPDIEALLPPPARGYYA</sequence>
<keyword id="KW-0560">Oxidoreductase</keyword>
<keyword id="KW-0575">Peroxidase</keyword>
<keyword id="KW-1185">Reference proteome</keyword>
<keyword id="KW-0712">Selenocysteine</keyword>
<gene>
    <name type="primary">GPX1</name>
    <name type="ordered locus">MC066L</name>
</gene>
<dbReference type="EC" id="1.11.1.9"/>
<dbReference type="EMBL" id="U60315">
    <property type="protein sequence ID" value="AAC55194.2"/>
    <property type="molecule type" value="Genomic_DNA"/>
</dbReference>
<dbReference type="PIR" id="T30668">
    <property type="entry name" value="T30668"/>
</dbReference>
<dbReference type="RefSeq" id="NP_044017.2">
    <property type="nucleotide sequence ID" value="NC_001731.1"/>
</dbReference>
<dbReference type="GeneID" id="1487085"/>
<dbReference type="KEGG" id="vg:1487085"/>
<dbReference type="OrthoDB" id="28279at10239"/>
<dbReference type="Proteomes" id="UP000000869">
    <property type="component" value="Genome"/>
</dbReference>
<dbReference type="GO" id="GO:0004602">
    <property type="term" value="F:glutathione peroxidase activity"/>
    <property type="evidence" value="ECO:0007669"/>
    <property type="project" value="UniProtKB-EC"/>
</dbReference>
<dbReference type="GO" id="GO:0006749">
    <property type="term" value="P:glutathione metabolic process"/>
    <property type="evidence" value="ECO:0007669"/>
    <property type="project" value="TreeGrafter"/>
</dbReference>
<dbReference type="GO" id="GO:0042744">
    <property type="term" value="P:hydrogen peroxide catabolic process"/>
    <property type="evidence" value="ECO:0007669"/>
    <property type="project" value="TreeGrafter"/>
</dbReference>
<dbReference type="GO" id="GO:0042542">
    <property type="term" value="P:response to hydrogen peroxide"/>
    <property type="evidence" value="ECO:0007669"/>
    <property type="project" value="TreeGrafter"/>
</dbReference>
<dbReference type="GO" id="GO:0010269">
    <property type="term" value="P:response to selenium ion"/>
    <property type="evidence" value="ECO:0007669"/>
    <property type="project" value="TreeGrafter"/>
</dbReference>
<dbReference type="CDD" id="cd00340">
    <property type="entry name" value="GSH_Peroxidase"/>
    <property type="match status" value="1"/>
</dbReference>
<dbReference type="FunFam" id="3.40.30.10:FF:000153">
    <property type="entry name" value="Glutathione peroxidase"/>
    <property type="match status" value="1"/>
</dbReference>
<dbReference type="Gene3D" id="3.40.30.10">
    <property type="entry name" value="Glutaredoxin"/>
    <property type="match status" value="1"/>
</dbReference>
<dbReference type="InterPro" id="IPR000889">
    <property type="entry name" value="Glutathione_peroxidase"/>
</dbReference>
<dbReference type="InterPro" id="IPR029759">
    <property type="entry name" value="GPX_AS"/>
</dbReference>
<dbReference type="InterPro" id="IPR029760">
    <property type="entry name" value="GPX_CS"/>
</dbReference>
<dbReference type="InterPro" id="IPR036249">
    <property type="entry name" value="Thioredoxin-like_sf"/>
</dbReference>
<dbReference type="PANTHER" id="PTHR11592">
    <property type="entry name" value="GLUTATHIONE PEROXIDASE"/>
    <property type="match status" value="1"/>
</dbReference>
<dbReference type="PANTHER" id="PTHR11592:SF41">
    <property type="entry name" value="GLUTATHIONE PEROXIDASE 1"/>
    <property type="match status" value="1"/>
</dbReference>
<dbReference type="Pfam" id="PF00255">
    <property type="entry name" value="GSHPx"/>
    <property type="match status" value="1"/>
</dbReference>
<dbReference type="PIRSF" id="PIRSF000303">
    <property type="entry name" value="Glutathion_perox"/>
    <property type="match status" value="1"/>
</dbReference>
<dbReference type="PRINTS" id="PR01011">
    <property type="entry name" value="GLUTPROXDASE"/>
</dbReference>
<dbReference type="SUPFAM" id="SSF52833">
    <property type="entry name" value="Thioredoxin-like"/>
    <property type="match status" value="1"/>
</dbReference>
<dbReference type="PROSITE" id="PS00460">
    <property type="entry name" value="GLUTATHIONE_PEROXID_1"/>
    <property type="match status" value="1"/>
</dbReference>
<dbReference type="PROSITE" id="PS00763">
    <property type="entry name" value="GLUTATHIONE_PEROXID_2"/>
    <property type="match status" value="1"/>
</dbReference>
<dbReference type="PROSITE" id="PS51355">
    <property type="entry name" value="GLUTATHIONE_PEROXID_3"/>
    <property type="match status" value="1"/>
</dbReference>
<accession>Q98234</accession>
<organismHost>
    <name type="scientific">Homo sapiens</name>
    <name type="common">Human</name>
    <dbReference type="NCBI Taxonomy" id="9606"/>
</organismHost>
<reference key="1">
    <citation type="journal article" date="1996" name="Science">
        <title>Genome sequence of a human tumorigenic poxvirus: prediction of specific host response-evasion genes.</title>
        <authorList>
            <person name="Senkevich T.G."/>
            <person name="Bugert J.J."/>
            <person name="Sisler J.R."/>
            <person name="Koonin E.V."/>
            <person name="Darai G."/>
            <person name="Moss B."/>
        </authorList>
    </citation>
    <scope>NUCLEOTIDE SEQUENCE [LARGE SCALE GENOMIC DNA]</scope>
    <scope>FUNCTION</scope>
</reference>
<organism>
    <name type="scientific">Molluscum contagiosum virus subtype 1</name>
    <name type="common">MOCV</name>
    <name type="synonym">MCVI</name>
    <dbReference type="NCBI Taxonomy" id="10280"/>
    <lineage>
        <taxon>Viruses</taxon>
        <taxon>Varidnaviria</taxon>
        <taxon>Bamfordvirae</taxon>
        <taxon>Nucleocytoviricota</taxon>
        <taxon>Pokkesviricetes</taxon>
        <taxon>Chitovirales</taxon>
        <taxon>Poxviridae</taxon>
        <taxon>Chordopoxvirinae</taxon>
        <taxon>Molluscipoxvirus</taxon>
        <taxon>Molluscum contagiosum virus</taxon>
    </lineage>
</organism>